<sequence>MMFTSESDLMRTIDWNEESNSVVLVDQTLLPQEYKVIECKTLSSLCEAIKSLRIRGAPALGAAGGFGIALAASLSGAKDLESMTRDLKVAAKALKSTRSTAVNLGWGVDRVLNAISDAFDVQGARDIALQEARDIAEEDIATNKLIGKYGTKFLKDGDSVLTHCNAGRLACVDWGTALGVVRSAIEEGKEIKVIACETRPLNQGSRITTWELMQDKIPVTLIADSMAGWAMHQGLVDSVLVGADRITQDVVFNKIGTYTHSILAKEHEIPFYVAAPISTFDFKGWEGSVKIEMRDPDELRFSGCQQLAPKDVEVYNPAFDATPMENVTAIITDKGVFYPPFLLDEVLV</sequence>
<dbReference type="EC" id="5.3.1.23" evidence="1"/>
<dbReference type="EMBL" id="AE010299">
    <property type="protein sequence ID" value="AAM03530.1"/>
    <property type="molecule type" value="Genomic_DNA"/>
</dbReference>
<dbReference type="SMR" id="Q8TUJ1"/>
<dbReference type="FunCoup" id="Q8TUJ1">
    <property type="interactions" value="186"/>
</dbReference>
<dbReference type="STRING" id="188937.MA_0076"/>
<dbReference type="EnsemblBacteria" id="AAM03530">
    <property type="protein sequence ID" value="AAM03530"/>
    <property type="gene ID" value="MA_0076"/>
</dbReference>
<dbReference type="KEGG" id="mac:MA_0076"/>
<dbReference type="HOGENOM" id="CLU_016218_1_2_2"/>
<dbReference type="InParanoid" id="Q8TUJ1"/>
<dbReference type="PhylomeDB" id="Q8TUJ1"/>
<dbReference type="Proteomes" id="UP000002487">
    <property type="component" value="Chromosome"/>
</dbReference>
<dbReference type="GO" id="GO:0046523">
    <property type="term" value="F:S-methyl-5-thioribose-1-phosphate isomerase activity"/>
    <property type="evidence" value="ECO:0000318"/>
    <property type="project" value="GO_Central"/>
</dbReference>
<dbReference type="GO" id="GO:0019509">
    <property type="term" value="P:L-methionine salvage from methylthioadenosine"/>
    <property type="evidence" value="ECO:0000318"/>
    <property type="project" value="GO_Central"/>
</dbReference>
<dbReference type="FunFam" id="1.20.120.420:FF:000012">
    <property type="entry name" value="Putative methylthioribose-1-phosphate isomerase"/>
    <property type="match status" value="1"/>
</dbReference>
<dbReference type="FunFam" id="3.40.50.10470:FF:000038">
    <property type="entry name" value="Putative methylthioribose-1-phosphate isomerase"/>
    <property type="match status" value="1"/>
</dbReference>
<dbReference type="Gene3D" id="1.20.120.420">
    <property type="entry name" value="translation initiation factor eif-2b, domain 1"/>
    <property type="match status" value="1"/>
</dbReference>
<dbReference type="Gene3D" id="3.40.50.10470">
    <property type="entry name" value="Translation initiation factor eif-2b, domain 2"/>
    <property type="match status" value="1"/>
</dbReference>
<dbReference type="HAMAP" id="MF_01678">
    <property type="entry name" value="Salvage_MtnA"/>
    <property type="match status" value="1"/>
</dbReference>
<dbReference type="InterPro" id="IPR000649">
    <property type="entry name" value="IF-2B-related"/>
</dbReference>
<dbReference type="InterPro" id="IPR005251">
    <property type="entry name" value="IF-M1Pi"/>
</dbReference>
<dbReference type="InterPro" id="IPR042529">
    <property type="entry name" value="IF_2B-like_C"/>
</dbReference>
<dbReference type="InterPro" id="IPR011559">
    <property type="entry name" value="Initiation_fac_2B_a/b/d"/>
</dbReference>
<dbReference type="InterPro" id="IPR027363">
    <property type="entry name" value="M1Pi_N"/>
</dbReference>
<dbReference type="InterPro" id="IPR037171">
    <property type="entry name" value="NagB/RpiA_transferase-like"/>
</dbReference>
<dbReference type="NCBIfam" id="TIGR00524">
    <property type="entry name" value="eIF-2B_rel"/>
    <property type="match status" value="1"/>
</dbReference>
<dbReference type="NCBIfam" id="NF004326">
    <property type="entry name" value="PRK05720.1"/>
    <property type="match status" value="1"/>
</dbReference>
<dbReference type="NCBIfam" id="NF004700">
    <property type="entry name" value="PRK06036.1"/>
    <property type="match status" value="1"/>
</dbReference>
<dbReference type="NCBIfam" id="TIGR00512">
    <property type="entry name" value="salvage_mtnA"/>
    <property type="match status" value="1"/>
</dbReference>
<dbReference type="PANTHER" id="PTHR43475">
    <property type="entry name" value="METHYLTHIORIBOSE-1-PHOSPHATE ISOMERASE"/>
    <property type="match status" value="1"/>
</dbReference>
<dbReference type="PANTHER" id="PTHR43475:SF1">
    <property type="entry name" value="METHYLTHIORIBOSE-1-PHOSPHATE ISOMERASE"/>
    <property type="match status" value="1"/>
</dbReference>
<dbReference type="Pfam" id="PF01008">
    <property type="entry name" value="IF-2B"/>
    <property type="match status" value="1"/>
</dbReference>
<dbReference type="SUPFAM" id="SSF100950">
    <property type="entry name" value="NagB/RpiA/CoA transferase-like"/>
    <property type="match status" value="1"/>
</dbReference>
<organism>
    <name type="scientific">Methanosarcina acetivorans (strain ATCC 35395 / DSM 2834 / JCM 12185 / C2A)</name>
    <dbReference type="NCBI Taxonomy" id="188937"/>
    <lineage>
        <taxon>Archaea</taxon>
        <taxon>Methanobacteriati</taxon>
        <taxon>Methanobacteriota</taxon>
        <taxon>Stenosarchaea group</taxon>
        <taxon>Methanomicrobia</taxon>
        <taxon>Methanosarcinales</taxon>
        <taxon>Methanosarcinaceae</taxon>
        <taxon>Methanosarcina</taxon>
    </lineage>
</organism>
<name>MTNA_METAC</name>
<accession>Q8TUJ1</accession>
<protein>
    <recommendedName>
        <fullName evidence="1">Putative methylthioribose-1-phosphate isomerase</fullName>
        <shortName evidence="1">M1Pi</shortName>
        <shortName evidence="1">MTR-1-P isomerase</shortName>
        <ecNumber evidence="1">5.3.1.23</ecNumber>
    </recommendedName>
    <alternativeName>
        <fullName evidence="1">MTNA-like protein</fullName>
        <shortName evidence="1">aMTNA</shortName>
    </alternativeName>
    <alternativeName>
        <fullName evidence="1">S-methyl-5-thioribose-1-phosphate isomerase</fullName>
    </alternativeName>
</protein>
<evidence type="ECO:0000255" key="1">
    <source>
        <dbReference type="HAMAP-Rule" id="MF_01678"/>
    </source>
</evidence>
<evidence type="ECO:0000305" key="2"/>
<gene>
    <name type="ordered locus">MA_0076</name>
</gene>
<proteinExistence type="inferred from homology"/>
<feature type="chain" id="PRO_0000401967" description="Putative methylthioribose-1-phosphate isomerase">
    <location>
        <begin position="1"/>
        <end position="348"/>
    </location>
</feature>
<feature type="active site" description="Proton donor" evidence="1">
    <location>
        <position position="244"/>
    </location>
</feature>
<feature type="binding site" evidence="1">
    <location>
        <begin position="55"/>
        <end position="57"/>
    </location>
    <ligand>
        <name>substrate</name>
    </ligand>
</feature>
<feature type="binding site" evidence="1">
    <location>
        <position position="98"/>
    </location>
    <ligand>
        <name>substrate</name>
    </ligand>
</feature>
<feature type="binding site" evidence="1">
    <location>
        <position position="203"/>
    </location>
    <ligand>
        <name>substrate</name>
    </ligand>
</feature>
<feature type="binding site" evidence="1">
    <location>
        <begin position="253"/>
        <end position="254"/>
    </location>
    <ligand>
        <name>substrate</name>
    </ligand>
</feature>
<feature type="site" description="Transition state stabilizer" evidence="1">
    <location>
        <position position="164"/>
    </location>
</feature>
<comment type="function">
    <text evidence="1">Catalyzes the interconversion of methylthioribose-1-phosphate (MTR-1-P) into methylthioribulose-1-phosphate (MTRu-1-P).</text>
</comment>
<comment type="catalytic activity">
    <reaction evidence="1">
        <text>5-(methylsulfanyl)-alpha-D-ribose 1-phosphate = 5-(methylsulfanyl)-D-ribulose 1-phosphate</text>
        <dbReference type="Rhea" id="RHEA:19989"/>
        <dbReference type="ChEBI" id="CHEBI:58533"/>
        <dbReference type="ChEBI" id="CHEBI:58548"/>
        <dbReference type="EC" id="5.3.1.23"/>
    </reaction>
</comment>
<comment type="similarity">
    <text evidence="2">Belongs to the eIF-2B alpha/beta/delta subunits family. MtnA subfamily.</text>
</comment>
<reference key="1">
    <citation type="journal article" date="2002" name="Genome Res.">
        <title>The genome of Methanosarcina acetivorans reveals extensive metabolic and physiological diversity.</title>
        <authorList>
            <person name="Galagan J.E."/>
            <person name="Nusbaum C."/>
            <person name="Roy A."/>
            <person name="Endrizzi M.G."/>
            <person name="Macdonald P."/>
            <person name="FitzHugh W."/>
            <person name="Calvo S."/>
            <person name="Engels R."/>
            <person name="Smirnov S."/>
            <person name="Atnoor D."/>
            <person name="Brown A."/>
            <person name="Allen N."/>
            <person name="Naylor J."/>
            <person name="Stange-Thomann N."/>
            <person name="DeArellano K."/>
            <person name="Johnson R."/>
            <person name="Linton L."/>
            <person name="McEwan P."/>
            <person name="McKernan K."/>
            <person name="Talamas J."/>
            <person name="Tirrell A."/>
            <person name="Ye W."/>
            <person name="Zimmer A."/>
            <person name="Barber R.D."/>
            <person name="Cann I."/>
            <person name="Graham D.E."/>
            <person name="Grahame D.A."/>
            <person name="Guss A.M."/>
            <person name="Hedderich R."/>
            <person name="Ingram-Smith C."/>
            <person name="Kuettner H.C."/>
            <person name="Krzycki J.A."/>
            <person name="Leigh J.A."/>
            <person name="Li W."/>
            <person name="Liu J."/>
            <person name="Mukhopadhyay B."/>
            <person name="Reeve J.N."/>
            <person name="Smith K."/>
            <person name="Springer T.A."/>
            <person name="Umayam L.A."/>
            <person name="White O."/>
            <person name="White R.H."/>
            <person name="de Macario E.C."/>
            <person name="Ferry J.G."/>
            <person name="Jarrell K.F."/>
            <person name="Jing H."/>
            <person name="Macario A.J.L."/>
            <person name="Paulsen I.T."/>
            <person name="Pritchett M."/>
            <person name="Sowers K.R."/>
            <person name="Swanson R.V."/>
            <person name="Zinder S.H."/>
            <person name="Lander E."/>
            <person name="Metcalf W.W."/>
            <person name="Birren B."/>
        </authorList>
    </citation>
    <scope>NUCLEOTIDE SEQUENCE [LARGE SCALE GENOMIC DNA]</scope>
    <source>
        <strain>ATCC 35395 / DSM 2834 / JCM 12185 / C2A</strain>
    </source>
</reference>
<keyword id="KW-0028">Amino-acid biosynthesis</keyword>
<keyword id="KW-0413">Isomerase</keyword>
<keyword id="KW-0486">Methionine biosynthesis</keyword>
<keyword id="KW-1185">Reference proteome</keyword>